<comment type="function">
    <text evidence="1">Catalyzes the transfer of endogenously produced octanoic acid from octanoyl-acyl-carrier-protein onto the lipoyl domains of lipoate-dependent enzymes. Lipoyl-ACP can also act as a substrate although octanoyl-ACP is likely to be the physiological substrate.</text>
</comment>
<comment type="catalytic activity">
    <reaction evidence="1">
        <text>octanoyl-[ACP] + L-lysyl-[protein] = N(6)-octanoyl-L-lysyl-[protein] + holo-[ACP] + H(+)</text>
        <dbReference type="Rhea" id="RHEA:17665"/>
        <dbReference type="Rhea" id="RHEA-COMP:9636"/>
        <dbReference type="Rhea" id="RHEA-COMP:9685"/>
        <dbReference type="Rhea" id="RHEA-COMP:9752"/>
        <dbReference type="Rhea" id="RHEA-COMP:9928"/>
        <dbReference type="ChEBI" id="CHEBI:15378"/>
        <dbReference type="ChEBI" id="CHEBI:29969"/>
        <dbReference type="ChEBI" id="CHEBI:64479"/>
        <dbReference type="ChEBI" id="CHEBI:78463"/>
        <dbReference type="ChEBI" id="CHEBI:78809"/>
        <dbReference type="EC" id="2.3.1.181"/>
    </reaction>
</comment>
<comment type="pathway">
    <text evidence="1">Protein modification; protein lipoylation via endogenous pathway; protein N(6)-(lipoyl)lysine from octanoyl-[acyl-carrier-protein]: step 1/2.</text>
</comment>
<comment type="subcellular location">
    <subcellularLocation>
        <location evidence="1">Cytoplasm</location>
    </subcellularLocation>
</comment>
<comment type="miscellaneous">
    <text evidence="1">In the reaction, the free carboxyl group of octanoic acid is attached via an amide linkage to the epsilon-amino group of a specific lysine residue of lipoyl domains of lipoate-dependent enzymes.</text>
</comment>
<comment type="similarity">
    <text evidence="1">Belongs to the LipB family.</text>
</comment>
<protein>
    <recommendedName>
        <fullName evidence="1">Octanoyltransferase</fullName>
        <ecNumber evidence="1">2.3.1.181</ecNumber>
    </recommendedName>
    <alternativeName>
        <fullName evidence="1">Lipoate-protein ligase B</fullName>
    </alternativeName>
    <alternativeName>
        <fullName evidence="1">Lipoyl/octanoyl transferase</fullName>
    </alternativeName>
    <alternativeName>
        <fullName evidence="1">Octanoyl-[acyl-carrier-protein]-protein N-octanoyltransferase</fullName>
    </alternativeName>
</protein>
<gene>
    <name evidence="1" type="primary">lipB</name>
    <name type="ordered locus">UTI89_C0632</name>
</gene>
<organism>
    <name type="scientific">Escherichia coli (strain UTI89 / UPEC)</name>
    <dbReference type="NCBI Taxonomy" id="364106"/>
    <lineage>
        <taxon>Bacteria</taxon>
        <taxon>Pseudomonadati</taxon>
        <taxon>Pseudomonadota</taxon>
        <taxon>Gammaproteobacteria</taxon>
        <taxon>Enterobacterales</taxon>
        <taxon>Enterobacteriaceae</taxon>
        <taxon>Escherichia</taxon>
    </lineage>
</organism>
<sequence>MYQDKILVRQLGLQPYEPISQAMHEFTDTRDDSTLDEIWLVEHYPVFTQGQAGKAEHILMPGDIPVIQSDRGGQVTYHGPGQQVMYVLLNLKRRKLGVRELVTLLEQTVVNTLAELGIEAHPRADAPGVYVGEKKICSLGLRIRRGCSFHGLALNVNMDLSPFLRINPCGYAGMEMAKISQWKPEATTNNIAPRLLENILALLNNPDFEYITA</sequence>
<evidence type="ECO:0000255" key="1">
    <source>
        <dbReference type="HAMAP-Rule" id="MF_00013"/>
    </source>
</evidence>
<evidence type="ECO:0000255" key="2">
    <source>
        <dbReference type="PROSITE-ProRule" id="PRU01067"/>
    </source>
</evidence>
<dbReference type="EC" id="2.3.1.181" evidence="1"/>
<dbReference type="EMBL" id="CP000243">
    <property type="protein sequence ID" value="ABE06132.1"/>
    <property type="molecule type" value="Genomic_DNA"/>
</dbReference>
<dbReference type="RefSeq" id="WP_000284027.1">
    <property type="nucleotide sequence ID" value="NZ_CP064825.1"/>
</dbReference>
<dbReference type="SMR" id="Q1RET2"/>
<dbReference type="GeneID" id="93776852"/>
<dbReference type="KEGG" id="eci:UTI89_C0632"/>
<dbReference type="HOGENOM" id="CLU_035168_3_1_6"/>
<dbReference type="UniPathway" id="UPA00538">
    <property type="reaction ID" value="UER00592"/>
</dbReference>
<dbReference type="Proteomes" id="UP000001952">
    <property type="component" value="Chromosome"/>
</dbReference>
<dbReference type="GO" id="GO:0005737">
    <property type="term" value="C:cytoplasm"/>
    <property type="evidence" value="ECO:0007669"/>
    <property type="project" value="UniProtKB-SubCell"/>
</dbReference>
<dbReference type="GO" id="GO:0033819">
    <property type="term" value="F:lipoyl(octanoyl) transferase activity"/>
    <property type="evidence" value="ECO:0007669"/>
    <property type="project" value="UniProtKB-EC"/>
</dbReference>
<dbReference type="GO" id="GO:0036211">
    <property type="term" value="P:protein modification process"/>
    <property type="evidence" value="ECO:0007669"/>
    <property type="project" value="InterPro"/>
</dbReference>
<dbReference type="CDD" id="cd16444">
    <property type="entry name" value="LipB"/>
    <property type="match status" value="1"/>
</dbReference>
<dbReference type="FunFam" id="3.30.930.10:FF:000020">
    <property type="entry name" value="Octanoyltransferase"/>
    <property type="match status" value="1"/>
</dbReference>
<dbReference type="Gene3D" id="3.30.930.10">
    <property type="entry name" value="Bira Bifunctional Protein, Domain 2"/>
    <property type="match status" value="1"/>
</dbReference>
<dbReference type="HAMAP" id="MF_00013">
    <property type="entry name" value="LipB"/>
    <property type="match status" value="1"/>
</dbReference>
<dbReference type="InterPro" id="IPR045864">
    <property type="entry name" value="aa-tRNA-synth_II/BPL/LPL"/>
</dbReference>
<dbReference type="InterPro" id="IPR004143">
    <property type="entry name" value="BPL_LPL_catalytic"/>
</dbReference>
<dbReference type="InterPro" id="IPR000544">
    <property type="entry name" value="Octanoyltransferase"/>
</dbReference>
<dbReference type="InterPro" id="IPR020605">
    <property type="entry name" value="Octanoyltransferase_CS"/>
</dbReference>
<dbReference type="NCBIfam" id="TIGR00214">
    <property type="entry name" value="lipB"/>
    <property type="match status" value="1"/>
</dbReference>
<dbReference type="NCBIfam" id="NF010922">
    <property type="entry name" value="PRK14342.1"/>
    <property type="match status" value="1"/>
</dbReference>
<dbReference type="PANTHER" id="PTHR10993:SF7">
    <property type="entry name" value="LIPOYLTRANSFERASE 2, MITOCHONDRIAL-RELATED"/>
    <property type="match status" value="1"/>
</dbReference>
<dbReference type="PANTHER" id="PTHR10993">
    <property type="entry name" value="OCTANOYLTRANSFERASE"/>
    <property type="match status" value="1"/>
</dbReference>
<dbReference type="Pfam" id="PF21948">
    <property type="entry name" value="LplA-B_cat"/>
    <property type="match status" value="1"/>
</dbReference>
<dbReference type="PIRSF" id="PIRSF016262">
    <property type="entry name" value="LPLase"/>
    <property type="match status" value="1"/>
</dbReference>
<dbReference type="SUPFAM" id="SSF55681">
    <property type="entry name" value="Class II aaRS and biotin synthetases"/>
    <property type="match status" value="1"/>
</dbReference>
<dbReference type="PROSITE" id="PS51733">
    <property type="entry name" value="BPL_LPL_CATALYTIC"/>
    <property type="match status" value="1"/>
</dbReference>
<dbReference type="PROSITE" id="PS01313">
    <property type="entry name" value="LIPB"/>
    <property type="match status" value="1"/>
</dbReference>
<proteinExistence type="inferred from homology"/>
<accession>Q1RET2</accession>
<keyword id="KW-0012">Acyltransferase</keyword>
<keyword id="KW-0963">Cytoplasm</keyword>
<keyword id="KW-0808">Transferase</keyword>
<feature type="chain" id="PRO_1000001098" description="Octanoyltransferase">
    <location>
        <begin position="1"/>
        <end position="213"/>
    </location>
</feature>
<feature type="domain" description="BPL/LPL catalytic" evidence="2">
    <location>
        <begin position="32"/>
        <end position="207"/>
    </location>
</feature>
<feature type="active site" description="Acyl-thioester intermediate" evidence="1">
    <location>
        <position position="169"/>
    </location>
</feature>
<feature type="binding site" evidence="1">
    <location>
        <begin position="71"/>
        <end position="78"/>
    </location>
    <ligand>
        <name>substrate</name>
    </ligand>
</feature>
<feature type="binding site" evidence="1">
    <location>
        <begin position="138"/>
        <end position="140"/>
    </location>
    <ligand>
        <name>substrate</name>
    </ligand>
</feature>
<feature type="binding site" evidence="1">
    <location>
        <begin position="151"/>
        <end position="153"/>
    </location>
    <ligand>
        <name>substrate</name>
    </ligand>
</feature>
<feature type="site" description="Lowers pKa of active site Cys" evidence="1">
    <location>
        <position position="135"/>
    </location>
</feature>
<name>LIPB_ECOUT</name>
<reference key="1">
    <citation type="journal article" date="2006" name="Proc. Natl. Acad. Sci. U.S.A.">
        <title>Identification of genes subject to positive selection in uropathogenic strains of Escherichia coli: a comparative genomics approach.</title>
        <authorList>
            <person name="Chen S.L."/>
            <person name="Hung C.-S."/>
            <person name="Xu J."/>
            <person name="Reigstad C.S."/>
            <person name="Magrini V."/>
            <person name="Sabo A."/>
            <person name="Blasiar D."/>
            <person name="Bieri T."/>
            <person name="Meyer R.R."/>
            <person name="Ozersky P."/>
            <person name="Armstrong J.R."/>
            <person name="Fulton R.S."/>
            <person name="Latreille J.P."/>
            <person name="Spieth J."/>
            <person name="Hooton T.M."/>
            <person name="Mardis E.R."/>
            <person name="Hultgren S.J."/>
            <person name="Gordon J.I."/>
        </authorList>
    </citation>
    <scope>NUCLEOTIDE SEQUENCE [LARGE SCALE GENOMIC DNA]</scope>
    <source>
        <strain>UTI89 / UPEC</strain>
    </source>
</reference>